<reference key="1">
    <citation type="journal article" date="2002" name="J. Bacteriol.">
        <title>Whole-genome comparison of Mycobacterium tuberculosis clinical and laboratory strains.</title>
        <authorList>
            <person name="Fleischmann R.D."/>
            <person name="Alland D."/>
            <person name="Eisen J.A."/>
            <person name="Carpenter L."/>
            <person name="White O."/>
            <person name="Peterson J.D."/>
            <person name="DeBoy R.T."/>
            <person name="Dodson R.J."/>
            <person name="Gwinn M.L."/>
            <person name="Haft D.H."/>
            <person name="Hickey E.K."/>
            <person name="Kolonay J.F."/>
            <person name="Nelson W.C."/>
            <person name="Umayam L.A."/>
            <person name="Ermolaeva M.D."/>
            <person name="Salzberg S.L."/>
            <person name="Delcher A."/>
            <person name="Utterback T.R."/>
            <person name="Weidman J.F."/>
            <person name="Khouri H.M."/>
            <person name="Gill J."/>
            <person name="Mikula A."/>
            <person name="Bishai W."/>
            <person name="Jacobs W.R. Jr."/>
            <person name="Venter J.C."/>
            <person name="Fraser C.M."/>
        </authorList>
    </citation>
    <scope>NUCLEOTIDE SEQUENCE [LARGE SCALE GENOMIC DNA]</scope>
    <source>
        <strain>CDC 1551 / Oshkosh</strain>
    </source>
</reference>
<sequence>MNIDMAALHAIEVDRGISVNELLETIKSALLTAYRHTQGHQTDARIEIDRKTGVVRVIARETDEAGNLISEWDDTPEGFGRIAATTARQVMLQRFRDAENERTYGEFSTREGEIVAGVIQRDSRANARGLVVVRIGTETKASEGVIPAAEQVPGESYEHGNRLRCYVVGVTRGAREPLITLSRTHPNLVRKLFSLEVPEIADGSVEIVAVAREAGHRSKIAVRSNVAGLNAKGACIGPMGQRVRNVMSELSGEKIDIIDYDDDPARFVANALSPAKVVSVSVIDQTARAARVVVPDFQLSLAIGKEGQNARLAARLTGWRIDIRGDAPPPPPGQPEPGVSRGMAHDR</sequence>
<dbReference type="EMBL" id="AE000516">
    <property type="protein sequence ID" value="AAK47233.1"/>
    <property type="status" value="ALT_INIT"/>
    <property type="molecule type" value="Genomic_DNA"/>
</dbReference>
<dbReference type="PIR" id="D70588">
    <property type="entry name" value="D70588"/>
</dbReference>
<dbReference type="RefSeq" id="WP_003414511.1">
    <property type="nucleotide sequence ID" value="NZ_KK341227.1"/>
</dbReference>
<dbReference type="SMR" id="P9WIV2"/>
<dbReference type="GeneID" id="45426828"/>
<dbReference type="KEGG" id="mtc:MT2907"/>
<dbReference type="PATRIC" id="fig|83331.31.peg.3141"/>
<dbReference type="HOGENOM" id="CLU_029242_2_2_11"/>
<dbReference type="Proteomes" id="UP000001020">
    <property type="component" value="Chromosome"/>
</dbReference>
<dbReference type="GO" id="GO:0005829">
    <property type="term" value="C:cytosol"/>
    <property type="evidence" value="ECO:0007669"/>
    <property type="project" value="TreeGrafter"/>
</dbReference>
<dbReference type="GO" id="GO:0003700">
    <property type="term" value="F:DNA-binding transcription factor activity"/>
    <property type="evidence" value="ECO:0007669"/>
    <property type="project" value="InterPro"/>
</dbReference>
<dbReference type="GO" id="GO:0003723">
    <property type="term" value="F:RNA binding"/>
    <property type="evidence" value="ECO:0007669"/>
    <property type="project" value="UniProtKB-UniRule"/>
</dbReference>
<dbReference type="GO" id="GO:0006353">
    <property type="term" value="P:DNA-templated transcription termination"/>
    <property type="evidence" value="ECO:0007669"/>
    <property type="project" value="UniProtKB-UniRule"/>
</dbReference>
<dbReference type="GO" id="GO:0031564">
    <property type="term" value="P:transcription antitermination"/>
    <property type="evidence" value="ECO:0007669"/>
    <property type="project" value="UniProtKB-UniRule"/>
</dbReference>
<dbReference type="CDD" id="cd02134">
    <property type="entry name" value="KH-II_NusA_rpt1"/>
    <property type="match status" value="1"/>
</dbReference>
<dbReference type="CDD" id="cd22529">
    <property type="entry name" value="KH-II_NusA_rpt2"/>
    <property type="match status" value="1"/>
</dbReference>
<dbReference type="CDD" id="cd04455">
    <property type="entry name" value="S1_NusA"/>
    <property type="match status" value="1"/>
</dbReference>
<dbReference type="FunFam" id="2.40.50.140:FF:000098">
    <property type="entry name" value="Transcription termination/antitermination protein NusA"/>
    <property type="match status" value="1"/>
</dbReference>
<dbReference type="FunFam" id="3.30.1480.10:FF:000004">
    <property type="entry name" value="Transcription termination/antitermination protein NusA"/>
    <property type="match status" value="1"/>
</dbReference>
<dbReference type="FunFam" id="3.30.300.20:FF:000002">
    <property type="entry name" value="Transcription termination/antitermination protein NusA"/>
    <property type="match status" value="1"/>
</dbReference>
<dbReference type="FunFam" id="3.30.300.20:FF:000005">
    <property type="entry name" value="Transcription termination/antitermination protein NusA"/>
    <property type="match status" value="1"/>
</dbReference>
<dbReference type="Gene3D" id="3.30.300.20">
    <property type="match status" value="2"/>
</dbReference>
<dbReference type="Gene3D" id="2.40.50.140">
    <property type="entry name" value="Nucleic acid-binding proteins"/>
    <property type="match status" value="1"/>
</dbReference>
<dbReference type="Gene3D" id="3.30.1480.10">
    <property type="entry name" value="NusA, N-terminal domain"/>
    <property type="match status" value="1"/>
</dbReference>
<dbReference type="HAMAP" id="MF_00945_B">
    <property type="entry name" value="NusA_B"/>
    <property type="match status" value="1"/>
</dbReference>
<dbReference type="InterPro" id="IPR015946">
    <property type="entry name" value="KH_dom-like_a/b"/>
</dbReference>
<dbReference type="InterPro" id="IPR025249">
    <property type="entry name" value="KH_dom_NusA-like"/>
</dbReference>
<dbReference type="InterPro" id="IPR009019">
    <property type="entry name" value="KH_sf_prok-type"/>
</dbReference>
<dbReference type="InterPro" id="IPR012340">
    <property type="entry name" value="NA-bd_OB-fold"/>
</dbReference>
<dbReference type="InterPro" id="IPR030842">
    <property type="entry name" value="NusA_bac"/>
</dbReference>
<dbReference type="InterPro" id="IPR036555">
    <property type="entry name" value="NusA_N_sf"/>
</dbReference>
<dbReference type="InterPro" id="IPR003029">
    <property type="entry name" value="S1_domain"/>
</dbReference>
<dbReference type="InterPro" id="IPR013735">
    <property type="entry name" value="TF_NusA_N"/>
</dbReference>
<dbReference type="InterPro" id="IPR010213">
    <property type="entry name" value="Tscrpt_termination_fac_NusA"/>
</dbReference>
<dbReference type="NCBIfam" id="TIGR01953">
    <property type="entry name" value="NusA"/>
    <property type="match status" value="1"/>
</dbReference>
<dbReference type="PANTHER" id="PTHR22648">
    <property type="entry name" value="TRANSCRIPTION TERMINATION FACTOR NUSA"/>
    <property type="match status" value="1"/>
</dbReference>
<dbReference type="PANTHER" id="PTHR22648:SF0">
    <property type="entry name" value="TRANSCRIPTION TERMINATION_ANTITERMINATION PROTEIN NUSA"/>
    <property type="match status" value="1"/>
</dbReference>
<dbReference type="Pfam" id="PF13184">
    <property type="entry name" value="KH_5"/>
    <property type="match status" value="1"/>
</dbReference>
<dbReference type="Pfam" id="PF08529">
    <property type="entry name" value="NusA_N"/>
    <property type="match status" value="2"/>
</dbReference>
<dbReference type="SMART" id="SM00316">
    <property type="entry name" value="S1"/>
    <property type="match status" value="1"/>
</dbReference>
<dbReference type="SUPFAM" id="SSF50249">
    <property type="entry name" value="Nucleic acid-binding proteins"/>
    <property type="match status" value="1"/>
</dbReference>
<dbReference type="SUPFAM" id="SSF54814">
    <property type="entry name" value="Prokaryotic type KH domain (KH-domain type II)"/>
    <property type="match status" value="2"/>
</dbReference>
<dbReference type="SUPFAM" id="SSF69705">
    <property type="entry name" value="Transcription factor NusA, N-terminal domain"/>
    <property type="match status" value="1"/>
</dbReference>
<dbReference type="PROSITE" id="PS50084">
    <property type="entry name" value="KH_TYPE_1"/>
    <property type="match status" value="1"/>
</dbReference>
<dbReference type="PROSITE" id="PS50126">
    <property type="entry name" value="S1"/>
    <property type="match status" value="1"/>
</dbReference>
<organism>
    <name type="scientific">Mycobacterium tuberculosis (strain CDC 1551 / Oshkosh)</name>
    <dbReference type="NCBI Taxonomy" id="83331"/>
    <lineage>
        <taxon>Bacteria</taxon>
        <taxon>Bacillati</taxon>
        <taxon>Actinomycetota</taxon>
        <taxon>Actinomycetes</taxon>
        <taxon>Mycobacteriales</taxon>
        <taxon>Mycobacteriaceae</taxon>
        <taxon>Mycobacterium</taxon>
        <taxon>Mycobacterium tuberculosis complex</taxon>
    </lineage>
</organism>
<proteinExistence type="inferred from homology"/>
<comment type="function">
    <text evidence="2">Participates in both transcription termination and antitermination.</text>
</comment>
<comment type="subunit">
    <text evidence="2">Monomer. Binds directly to the core enzyme of the DNA-dependent RNA polymerase and to nascent RNA.</text>
</comment>
<comment type="subcellular location">
    <subcellularLocation>
        <location evidence="2">Cytoplasm</location>
    </subcellularLocation>
</comment>
<comment type="domain">
    <text evidence="1">Contains an N-terminal region that probably interacts with RNA polymerase and a C-terminal region composed of 3 RNA binding domains, S1, KH 1 and KH 2.</text>
</comment>
<comment type="similarity">
    <text evidence="2">Belongs to the NusA family.</text>
</comment>
<comment type="sequence caution" evidence="4">
    <conflict type="erroneous initiation">
        <sequence resource="EMBL-CDS" id="AAK47233"/>
    </conflict>
</comment>
<keyword id="KW-0963">Cytoplasm</keyword>
<keyword id="KW-1185">Reference proteome</keyword>
<keyword id="KW-0677">Repeat</keyword>
<keyword id="KW-0694">RNA-binding</keyword>
<keyword id="KW-0804">Transcription</keyword>
<keyword id="KW-0889">Transcription antitermination</keyword>
<keyword id="KW-0805">Transcription regulation</keyword>
<keyword id="KW-0806">Transcription termination</keyword>
<feature type="chain" id="PRO_0000427940" description="Transcription termination/antitermination protein NusA">
    <location>
        <begin position="1"/>
        <end position="347"/>
    </location>
</feature>
<feature type="domain" description="S1 motif" evidence="2">
    <location>
        <begin position="112"/>
        <end position="184"/>
    </location>
</feature>
<feature type="domain" description="KH 1" evidence="2">
    <location>
        <begin position="220"/>
        <end position="286"/>
    </location>
</feature>
<feature type="domain" description="KH 2" evidence="2">
    <location>
        <begin position="287"/>
        <end position="347"/>
    </location>
</feature>
<feature type="region of interest" description="Disordered" evidence="3">
    <location>
        <begin position="322"/>
        <end position="347"/>
    </location>
</feature>
<name>NUSA_MYCTO</name>
<evidence type="ECO:0000250" key="1"/>
<evidence type="ECO:0000255" key="2">
    <source>
        <dbReference type="HAMAP-Rule" id="MF_00945"/>
    </source>
</evidence>
<evidence type="ECO:0000256" key="3">
    <source>
        <dbReference type="SAM" id="MobiDB-lite"/>
    </source>
</evidence>
<evidence type="ECO:0000305" key="4"/>
<accession>P9WIV2</accession>
<accession>L0TDQ4</accession>
<accession>O05818</accession>
<accession>P0A5M2</accession>
<gene>
    <name evidence="2" type="primary">nusA</name>
    <name type="ordered locus">MT2907</name>
</gene>
<protein>
    <recommendedName>
        <fullName evidence="2">Transcription termination/antitermination protein NusA</fullName>
    </recommendedName>
</protein>